<reference key="1">
    <citation type="journal article" date="2004" name="J. Bacteriol.">
        <title>The genome sequence of Mycoplasma hyopneumoniae strain 232, the agent of swine mycoplasmosis.</title>
        <authorList>
            <person name="Minion F.C."/>
            <person name="Lefkowitz E.J."/>
            <person name="Madsen M.L."/>
            <person name="Cleary B.J."/>
            <person name="Swartzell S.M."/>
            <person name="Mahairas G.G."/>
        </authorList>
    </citation>
    <scope>NUCLEOTIDE SEQUENCE [LARGE SCALE GENOMIC DNA]</scope>
    <source>
        <strain>232</strain>
    </source>
</reference>
<dbReference type="EC" id="7.6.2.11" evidence="1"/>
<dbReference type="EMBL" id="AE017332">
    <property type="protein sequence ID" value="AAV27957.1"/>
    <property type="molecule type" value="Genomic_DNA"/>
</dbReference>
<dbReference type="RefSeq" id="WP_011206392.1">
    <property type="nucleotide sequence ID" value="NC_006360.1"/>
</dbReference>
<dbReference type="SMR" id="Q5ZZZ7"/>
<dbReference type="KEGG" id="mhy:mhp559"/>
<dbReference type="eggNOG" id="COG3839">
    <property type="taxonomic scope" value="Bacteria"/>
</dbReference>
<dbReference type="HOGENOM" id="CLU_000604_1_1_14"/>
<dbReference type="PhylomeDB" id="Q5ZZZ7"/>
<dbReference type="Proteomes" id="UP000006822">
    <property type="component" value="Chromosome"/>
</dbReference>
<dbReference type="GO" id="GO:0043190">
    <property type="term" value="C:ATP-binding cassette (ABC) transporter complex"/>
    <property type="evidence" value="ECO:0007669"/>
    <property type="project" value="InterPro"/>
</dbReference>
<dbReference type="GO" id="GO:0015417">
    <property type="term" value="F:ABC-type polyamine transporter activity"/>
    <property type="evidence" value="ECO:0007669"/>
    <property type="project" value="UniProtKB-EC"/>
</dbReference>
<dbReference type="GO" id="GO:0005524">
    <property type="term" value="F:ATP binding"/>
    <property type="evidence" value="ECO:0007669"/>
    <property type="project" value="UniProtKB-KW"/>
</dbReference>
<dbReference type="GO" id="GO:0016887">
    <property type="term" value="F:ATP hydrolysis activity"/>
    <property type="evidence" value="ECO:0007669"/>
    <property type="project" value="InterPro"/>
</dbReference>
<dbReference type="Gene3D" id="2.40.50.100">
    <property type="match status" value="1"/>
</dbReference>
<dbReference type="Gene3D" id="3.40.50.300">
    <property type="entry name" value="P-loop containing nucleotide triphosphate hydrolases"/>
    <property type="match status" value="2"/>
</dbReference>
<dbReference type="InterPro" id="IPR003593">
    <property type="entry name" value="AAA+_ATPase"/>
</dbReference>
<dbReference type="InterPro" id="IPR050093">
    <property type="entry name" value="ABC_SmlMolc_Importer"/>
</dbReference>
<dbReference type="InterPro" id="IPR003439">
    <property type="entry name" value="ABC_transporter-like_ATP-bd"/>
</dbReference>
<dbReference type="InterPro" id="IPR017871">
    <property type="entry name" value="ABC_transporter-like_CS"/>
</dbReference>
<dbReference type="InterPro" id="IPR008995">
    <property type="entry name" value="Mo/tungstate-bd_C_term_dom"/>
</dbReference>
<dbReference type="InterPro" id="IPR027417">
    <property type="entry name" value="P-loop_NTPase"/>
</dbReference>
<dbReference type="InterPro" id="IPR013611">
    <property type="entry name" value="Transp-assoc_OB_typ2"/>
</dbReference>
<dbReference type="PANTHER" id="PTHR42781">
    <property type="entry name" value="SPERMIDINE/PUTRESCINE IMPORT ATP-BINDING PROTEIN POTA"/>
    <property type="match status" value="1"/>
</dbReference>
<dbReference type="PANTHER" id="PTHR42781:SF4">
    <property type="entry name" value="SPERMIDINE_PUTRESCINE IMPORT ATP-BINDING PROTEIN POTA"/>
    <property type="match status" value="1"/>
</dbReference>
<dbReference type="Pfam" id="PF00005">
    <property type="entry name" value="ABC_tran"/>
    <property type="match status" value="1"/>
</dbReference>
<dbReference type="Pfam" id="PF08402">
    <property type="entry name" value="TOBE_2"/>
    <property type="match status" value="1"/>
</dbReference>
<dbReference type="SMART" id="SM00382">
    <property type="entry name" value="AAA"/>
    <property type="match status" value="1"/>
</dbReference>
<dbReference type="SUPFAM" id="SSF50331">
    <property type="entry name" value="MOP-like"/>
    <property type="match status" value="1"/>
</dbReference>
<dbReference type="SUPFAM" id="SSF52540">
    <property type="entry name" value="P-loop containing nucleoside triphosphate hydrolases"/>
    <property type="match status" value="1"/>
</dbReference>
<dbReference type="PROSITE" id="PS00211">
    <property type="entry name" value="ABC_TRANSPORTER_1"/>
    <property type="match status" value="1"/>
</dbReference>
<dbReference type="PROSITE" id="PS50893">
    <property type="entry name" value="ABC_TRANSPORTER_2"/>
    <property type="match status" value="1"/>
</dbReference>
<dbReference type="PROSITE" id="PS51305">
    <property type="entry name" value="POTA"/>
    <property type="match status" value="1"/>
</dbReference>
<accession>Q5ZZZ7</accession>
<keyword id="KW-0067">ATP-binding</keyword>
<keyword id="KW-1003">Cell membrane</keyword>
<keyword id="KW-0472">Membrane</keyword>
<keyword id="KW-0547">Nucleotide-binding</keyword>
<keyword id="KW-1278">Translocase</keyword>
<keyword id="KW-0813">Transport</keyword>
<feature type="chain" id="PRO_0000286256" description="Spermidine/putrescine import ATP-binding protein PotA">
    <location>
        <begin position="1"/>
        <end position="444"/>
    </location>
</feature>
<feature type="domain" description="ABC transporter" evidence="1">
    <location>
        <begin position="11"/>
        <end position="332"/>
    </location>
</feature>
<feature type="region of interest" description="Insert">
    <location>
        <begin position="111"/>
        <end position="201"/>
    </location>
</feature>
<feature type="binding site" evidence="1">
    <location>
        <begin position="43"/>
        <end position="50"/>
    </location>
    <ligand>
        <name>ATP</name>
        <dbReference type="ChEBI" id="CHEBI:30616"/>
    </ligand>
</feature>
<comment type="function">
    <text evidence="1">Part of the ABC transporter complex PotABCD involved in spermidine/putrescine import. Responsible for energy coupling to the transport system.</text>
</comment>
<comment type="catalytic activity">
    <reaction evidence="1">
        <text>ATP + H2O + polyamine-[polyamine-binding protein]Side 1 = ADP + phosphate + polyamineSide 2 + [polyamine-binding protein]Side 1.</text>
        <dbReference type="EC" id="7.6.2.11"/>
    </reaction>
</comment>
<comment type="subunit">
    <text evidence="1">The complex is composed of two ATP-binding proteins (PotA), two transmembrane proteins (PotB and PotC) and a solute-binding protein (PotD).</text>
</comment>
<comment type="subcellular location">
    <subcellularLocation>
        <location evidence="1">Cell membrane</location>
        <topology evidence="1">Peripheral membrane protein</topology>
    </subcellularLocation>
</comment>
<comment type="similarity">
    <text evidence="1">Belongs to the ABC transporter superfamily. Spermidine/putrescine importer (TC 3.A.1.11.1) family.</text>
</comment>
<proteinExistence type="inferred from homology"/>
<name>POTA_MESH2</name>
<evidence type="ECO:0000255" key="1">
    <source>
        <dbReference type="HAMAP-Rule" id="MF_01726"/>
    </source>
</evidence>
<gene>
    <name evidence="1" type="primary">potA</name>
    <name type="ordered locus">mhp559</name>
</gene>
<protein>
    <recommendedName>
        <fullName evidence="1">Spermidine/putrescine import ATP-binding protein PotA</fullName>
        <ecNumber evidence="1">7.6.2.11</ecNumber>
    </recommendedName>
</protein>
<sequence>MKNIEKSEIIISLVDVDKEFGDKKVLDQINLDIKRGDFVTLLGPSGSGKTTILRLIGGFEWTTRGEIKFNGIDIKDVPAHKRDTATIFQDYALFPHLSVRGNIEFGLKLKRIKKKAEEIPDVVWKKFEHLKKKWQDKQKRKIKELKILQAHLEKLLENPQLDIKKRKKLQDKLDDSDFRYSNWENYLTSKSESFKKKYLTRRITKQEINKEITDIIDLVGLTGNENRAISELSGGMKQRVALARSLVIEPEIVLLDEPLSALDTKIRQKMQVFLKKIQQKLGLTFIFVTHDQDEALQLSDKIAIIRNGKIAQYDEPKQIYDYPVNKWVANFIGDSNFFQAKYIKKNQVEILGLKLYTIHDEFIPGQKLDCLIRPEDIDIDLNSGYFKGKVIQNIYKGSYYSLDIKVENTIINVETNDFYDLETQVFIKWDDDAIHLMEMENAEI</sequence>
<organism>
    <name type="scientific">Mesomycoplasma hyopneumoniae (strain 232)</name>
    <name type="common">Mycoplasma hyopneumoniae</name>
    <dbReference type="NCBI Taxonomy" id="295358"/>
    <lineage>
        <taxon>Bacteria</taxon>
        <taxon>Bacillati</taxon>
        <taxon>Mycoplasmatota</taxon>
        <taxon>Mycoplasmoidales</taxon>
        <taxon>Metamycoplasmataceae</taxon>
        <taxon>Mesomycoplasma</taxon>
    </lineage>
</organism>